<sequence length="616" mass="65213">MPPYRSRTTTHGRNMAGARGLWRATGMKDGDFGKPIIAVANSFTQFVPGHVHLKDLGQLVAREIEAAGGVAKEFNTIAVDDGIAMGHDGMLYSLPSREIIADSVEYMVNAHCADAIVCISNCDKITPGMLMASLRLNIPVVFVSGGPMEAGKVLLGGKTKALDLVDAMVAAADDKVSEADVAAIERSACPTCGSCSGMFTANSMNCLTEALGLALPGNGSMLATHGDRKRLFVEAGHLIVDLARRYYEQDDSSVLPRSIASFAAFENAMTLDISMGGSTNTVLHLLAAAHEGEIDFTMADIDRLSRRVPVLCKVAPAVADVHVEDVHRAGGVMAILGELERAGLIHGDLPVVHAPSLKEALERWDLRRTSSESVTEFFRAAPGGVPTQVAFSQNARWKETDVDRAGGVIRDVEHAFSKDGGLAVLYGNLAEDGAIVKTAGVDASILVFSGPARVFESQDAAVEAILANQIKPGDVLVIRYEGPRGGPGMQEMLYPTSYLKSKGLGKACALITDGRFSGGTSGLSIGHVSPEAAEGGLIGLVEEGDSIQIDIPNRRLHLDISDEALAHRRTAMAEKGKGAWKPAHRTRKVSTALRAYAAMATSAARGAVRDVDQLFH</sequence>
<dbReference type="EC" id="4.2.1.9" evidence="1"/>
<dbReference type="EMBL" id="CP001280">
    <property type="protein sequence ID" value="ACK52141.1"/>
    <property type="molecule type" value="Genomic_DNA"/>
</dbReference>
<dbReference type="RefSeq" id="WP_012592210.1">
    <property type="nucleotide sequence ID" value="NC_011666.1"/>
</dbReference>
<dbReference type="SMR" id="B8EQC8"/>
<dbReference type="STRING" id="395965.Msil_3234"/>
<dbReference type="KEGG" id="msl:Msil_3234"/>
<dbReference type="eggNOG" id="COG0129">
    <property type="taxonomic scope" value="Bacteria"/>
</dbReference>
<dbReference type="HOGENOM" id="CLU_014271_4_2_5"/>
<dbReference type="OrthoDB" id="9807077at2"/>
<dbReference type="UniPathway" id="UPA00047">
    <property type="reaction ID" value="UER00057"/>
</dbReference>
<dbReference type="UniPathway" id="UPA00049">
    <property type="reaction ID" value="UER00061"/>
</dbReference>
<dbReference type="Proteomes" id="UP000002257">
    <property type="component" value="Chromosome"/>
</dbReference>
<dbReference type="GO" id="GO:0005829">
    <property type="term" value="C:cytosol"/>
    <property type="evidence" value="ECO:0007669"/>
    <property type="project" value="TreeGrafter"/>
</dbReference>
<dbReference type="GO" id="GO:0051537">
    <property type="term" value="F:2 iron, 2 sulfur cluster binding"/>
    <property type="evidence" value="ECO:0007669"/>
    <property type="project" value="UniProtKB-UniRule"/>
</dbReference>
<dbReference type="GO" id="GO:0004160">
    <property type="term" value="F:dihydroxy-acid dehydratase activity"/>
    <property type="evidence" value="ECO:0007669"/>
    <property type="project" value="UniProtKB-UniRule"/>
</dbReference>
<dbReference type="GO" id="GO:0000287">
    <property type="term" value="F:magnesium ion binding"/>
    <property type="evidence" value="ECO:0007669"/>
    <property type="project" value="UniProtKB-UniRule"/>
</dbReference>
<dbReference type="GO" id="GO:0009097">
    <property type="term" value="P:isoleucine biosynthetic process"/>
    <property type="evidence" value="ECO:0007669"/>
    <property type="project" value="UniProtKB-UniRule"/>
</dbReference>
<dbReference type="GO" id="GO:0009099">
    <property type="term" value="P:L-valine biosynthetic process"/>
    <property type="evidence" value="ECO:0007669"/>
    <property type="project" value="UniProtKB-UniRule"/>
</dbReference>
<dbReference type="FunFam" id="3.50.30.80:FF:000001">
    <property type="entry name" value="Dihydroxy-acid dehydratase"/>
    <property type="match status" value="1"/>
</dbReference>
<dbReference type="Gene3D" id="3.50.30.80">
    <property type="entry name" value="IlvD/EDD C-terminal domain-like"/>
    <property type="match status" value="1"/>
</dbReference>
<dbReference type="HAMAP" id="MF_00012">
    <property type="entry name" value="IlvD"/>
    <property type="match status" value="1"/>
</dbReference>
<dbReference type="InterPro" id="IPR042096">
    <property type="entry name" value="Dihydro-acid_dehy_C"/>
</dbReference>
<dbReference type="InterPro" id="IPR004404">
    <property type="entry name" value="DihydroxyA_deHydtase"/>
</dbReference>
<dbReference type="InterPro" id="IPR020558">
    <property type="entry name" value="DiOHA_6PGluconate_deHydtase_CS"/>
</dbReference>
<dbReference type="InterPro" id="IPR056740">
    <property type="entry name" value="ILV_EDD_C"/>
</dbReference>
<dbReference type="InterPro" id="IPR000581">
    <property type="entry name" value="ILV_EDD_N"/>
</dbReference>
<dbReference type="InterPro" id="IPR037237">
    <property type="entry name" value="IlvD/EDD_N"/>
</dbReference>
<dbReference type="NCBIfam" id="TIGR00110">
    <property type="entry name" value="ilvD"/>
    <property type="match status" value="1"/>
</dbReference>
<dbReference type="NCBIfam" id="NF009103">
    <property type="entry name" value="PRK12448.1"/>
    <property type="match status" value="1"/>
</dbReference>
<dbReference type="PANTHER" id="PTHR43661">
    <property type="entry name" value="D-XYLONATE DEHYDRATASE"/>
    <property type="match status" value="1"/>
</dbReference>
<dbReference type="PANTHER" id="PTHR43661:SF3">
    <property type="entry name" value="D-XYLONATE DEHYDRATASE YAGF-RELATED"/>
    <property type="match status" value="1"/>
</dbReference>
<dbReference type="Pfam" id="PF24877">
    <property type="entry name" value="ILV_EDD_C"/>
    <property type="match status" value="1"/>
</dbReference>
<dbReference type="Pfam" id="PF00920">
    <property type="entry name" value="ILVD_EDD_N"/>
    <property type="match status" value="1"/>
</dbReference>
<dbReference type="SUPFAM" id="SSF143975">
    <property type="entry name" value="IlvD/EDD N-terminal domain-like"/>
    <property type="match status" value="1"/>
</dbReference>
<dbReference type="SUPFAM" id="SSF52016">
    <property type="entry name" value="LeuD/IlvD-like"/>
    <property type="match status" value="1"/>
</dbReference>
<dbReference type="PROSITE" id="PS00886">
    <property type="entry name" value="ILVD_EDD_1"/>
    <property type="match status" value="1"/>
</dbReference>
<dbReference type="PROSITE" id="PS00887">
    <property type="entry name" value="ILVD_EDD_2"/>
    <property type="match status" value="1"/>
</dbReference>
<gene>
    <name evidence="1" type="primary">ilvD</name>
    <name type="ordered locus">Msil_3234</name>
</gene>
<comment type="function">
    <text evidence="1">Functions in the biosynthesis of branched-chain amino acids. Catalyzes the dehydration of (2R,3R)-2,3-dihydroxy-3-methylpentanoate (2,3-dihydroxy-3-methylvalerate) into 2-oxo-3-methylpentanoate (2-oxo-3-methylvalerate) and of (2R)-2,3-dihydroxy-3-methylbutanoate (2,3-dihydroxyisovalerate) into 2-oxo-3-methylbutanoate (2-oxoisovalerate), the penultimate precursor to L-isoleucine and L-valine, respectively.</text>
</comment>
<comment type="catalytic activity">
    <reaction evidence="1">
        <text>(2R)-2,3-dihydroxy-3-methylbutanoate = 3-methyl-2-oxobutanoate + H2O</text>
        <dbReference type="Rhea" id="RHEA:24809"/>
        <dbReference type="ChEBI" id="CHEBI:11851"/>
        <dbReference type="ChEBI" id="CHEBI:15377"/>
        <dbReference type="ChEBI" id="CHEBI:49072"/>
        <dbReference type="EC" id="4.2.1.9"/>
    </reaction>
    <physiologicalReaction direction="left-to-right" evidence="1">
        <dbReference type="Rhea" id="RHEA:24810"/>
    </physiologicalReaction>
</comment>
<comment type="catalytic activity">
    <reaction evidence="1">
        <text>(2R,3R)-2,3-dihydroxy-3-methylpentanoate = (S)-3-methyl-2-oxopentanoate + H2O</text>
        <dbReference type="Rhea" id="RHEA:27694"/>
        <dbReference type="ChEBI" id="CHEBI:15377"/>
        <dbReference type="ChEBI" id="CHEBI:35146"/>
        <dbReference type="ChEBI" id="CHEBI:49258"/>
        <dbReference type="EC" id="4.2.1.9"/>
    </reaction>
    <physiologicalReaction direction="left-to-right" evidence="1">
        <dbReference type="Rhea" id="RHEA:27695"/>
    </physiologicalReaction>
</comment>
<comment type="cofactor">
    <cofactor evidence="1">
        <name>[2Fe-2S] cluster</name>
        <dbReference type="ChEBI" id="CHEBI:190135"/>
    </cofactor>
    <text evidence="1">Binds 1 [2Fe-2S] cluster per subunit. This cluster acts as a Lewis acid cofactor.</text>
</comment>
<comment type="cofactor">
    <cofactor evidence="1">
        <name>Mg(2+)</name>
        <dbReference type="ChEBI" id="CHEBI:18420"/>
    </cofactor>
</comment>
<comment type="pathway">
    <text evidence="1">Amino-acid biosynthesis; L-isoleucine biosynthesis; L-isoleucine from 2-oxobutanoate: step 3/4.</text>
</comment>
<comment type="pathway">
    <text evidence="1">Amino-acid biosynthesis; L-valine biosynthesis; L-valine from pyruvate: step 3/4.</text>
</comment>
<comment type="subunit">
    <text evidence="1">Homodimer.</text>
</comment>
<comment type="similarity">
    <text evidence="1">Belongs to the IlvD/Edd family.</text>
</comment>
<reference key="1">
    <citation type="journal article" date="2010" name="J. Bacteriol.">
        <title>Complete genome sequence of the aerobic facultative methanotroph Methylocella silvestris BL2.</title>
        <authorList>
            <person name="Chen Y."/>
            <person name="Crombie A."/>
            <person name="Rahman M.T."/>
            <person name="Dedysh S.N."/>
            <person name="Liesack W."/>
            <person name="Stott M.B."/>
            <person name="Alam M."/>
            <person name="Theisen A.R."/>
            <person name="Murrell J.C."/>
            <person name="Dunfield P.F."/>
        </authorList>
    </citation>
    <scope>NUCLEOTIDE SEQUENCE [LARGE SCALE GENOMIC DNA]</scope>
    <source>
        <strain>DSM 15510 / CIP 108128 / LMG 27833 / NCIMB 13906 / BL2</strain>
    </source>
</reference>
<organism>
    <name type="scientific">Methylocella silvestris (strain DSM 15510 / CIP 108128 / LMG 27833 / NCIMB 13906 / BL2)</name>
    <dbReference type="NCBI Taxonomy" id="395965"/>
    <lineage>
        <taxon>Bacteria</taxon>
        <taxon>Pseudomonadati</taxon>
        <taxon>Pseudomonadota</taxon>
        <taxon>Alphaproteobacteria</taxon>
        <taxon>Hyphomicrobiales</taxon>
        <taxon>Beijerinckiaceae</taxon>
        <taxon>Methylocella</taxon>
    </lineage>
</organism>
<proteinExistence type="inferred from homology"/>
<accession>B8EQC8</accession>
<protein>
    <recommendedName>
        <fullName evidence="1">Dihydroxy-acid dehydratase</fullName>
        <shortName evidence="1">DAD</shortName>
        <ecNumber evidence="1">4.2.1.9</ecNumber>
    </recommendedName>
</protein>
<keyword id="KW-0001">2Fe-2S</keyword>
<keyword id="KW-0028">Amino-acid biosynthesis</keyword>
<keyword id="KW-0100">Branched-chain amino acid biosynthesis</keyword>
<keyword id="KW-0408">Iron</keyword>
<keyword id="KW-0411">Iron-sulfur</keyword>
<keyword id="KW-0456">Lyase</keyword>
<keyword id="KW-0460">Magnesium</keyword>
<keyword id="KW-0479">Metal-binding</keyword>
<keyword id="KW-1185">Reference proteome</keyword>
<name>ILVD_METSB</name>
<feature type="chain" id="PRO_1000190671" description="Dihydroxy-acid dehydratase">
    <location>
        <begin position="1"/>
        <end position="616"/>
    </location>
</feature>
<feature type="active site" description="Proton acceptor" evidence="1">
    <location>
        <position position="517"/>
    </location>
</feature>
<feature type="binding site" evidence="1">
    <location>
        <position position="81"/>
    </location>
    <ligand>
        <name>Mg(2+)</name>
        <dbReference type="ChEBI" id="CHEBI:18420"/>
    </ligand>
</feature>
<feature type="binding site" evidence="1">
    <location>
        <position position="122"/>
    </location>
    <ligand>
        <name>[2Fe-2S] cluster</name>
        <dbReference type="ChEBI" id="CHEBI:190135"/>
    </ligand>
</feature>
<feature type="binding site" evidence="1">
    <location>
        <position position="123"/>
    </location>
    <ligand>
        <name>Mg(2+)</name>
        <dbReference type="ChEBI" id="CHEBI:18420"/>
    </ligand>
</feature>
<feature type="binding site" description="via carbamate group" evidence="1">
    <location>
        <position position="124"/>
    </location>
    <ligand>
        <name>Mg(2+)</name>
        <dbReference type="ChEBI" id="CHEBI:18420"/>
    </ligand>
</feature>
<feature type="binding site" evidence="1">
    <location>
        <position position="195"/>
    </location>
    <ligand>
        <name>[2Fe-2S] cluster</name>
        <dbReference type="ChEBI" id="CHEBI:190135"/>
    </ligand>
</feature>
<feature type="binding site" evidence="1">
    <location>
        <position position="491"/>
    </location>
    <ligand>
        <name>Mg(2+)</name>
        <dbReference type="ChEBI" id="CHEBI:18420"/>
    </ligand>
</feature>
<feature type="modified residue" description="N6-carboxylysine" evidence="1">
    <location>
        <position position="124"/>
    </location>
</feature>
<evidence type="ECO:0000255" key="1">
    <source>
        <dbReference type="HAMAP-Rule" id="MF_00012"/>
    </source>
</evidence>